<feature type="chain" id="PRO_0000355838" description="Large ribosomal subunit protein uL14">
    <location>
        <begin position="1"/>
        <end position="120"/>
    </location>
</feature>
<reference key="1">
    <citation type="journal article" date="2007" name="Proc. Natl. Acad. Sci. U.S.A.">
        <title>Parallel genomic evolution and metabolic interdependence in an ancient symbiosis.</title>
        <authorList>
            <person name="McCutcheon J.P."/>
            <person name="Moran N.A."/>
        </authorList>
    </citation>
    <scope>NUCLEOTIDE SEQUENCE [LARGE SCALE GENOMIC DNA]</scope>
    <source>
        <strain>GWSS</strain>
    </source>
</reference>
<accession>A8Z677</accession>
<sequence>MLQQESRIRVADNSGAKEVLLIRVLGGKKYAYIGDTIIVSIKEAIAGSSVKKGQLYKAVVVRTKKKIRRKDGSYIRFDDNACVLLTNTGEMKGTRILGPVSRELRDKEYTKIVSLATEVL</sequence>
<name>RL14_KARMG</name>
<gene>
    <name evidence="1" type="primary">rplN</name>
    <name type="ordered locus">SMGWSS_231</name>
</gene>
<proteinExistence type="inferred from homology"/>
<organism>
    <name type="scientific">Karelsulcia muelleri (strain GWSS)</name>
    <name type="common">Sulcia muelleri</name>
    <dbReference type="NCBI Taxonomy" id="444179"/>
    <lineage>
        <taxon>Bacteria</taxon>
        <taxon>Pseudomonadati</taxon>
        <taxon>Bacteroidota</taxon>
        <taxon>Flavobacteriia</taxon>
        <taxon>Flavobacteriales</taxon>
        <taxon>Candidatus Karelsulcia</taxon>
    </lineage>
</organism>
<keyword id="KW-0687">Ribonucleoprotein</keyword>
<keyword id="KW-0689">Ribosomal protein</keyword>
<keyword id="KW-0694">RNA-binding</keyword>
<keyword id="KW-0699">rRNA-binding</keyword>
<comment type="function">
    <text evidence="1">Binds to 23S rRNA. Forms part of two intersubunit bridges in the 70S ribosome.</text>
</comment>
<comment type="subunit">
    <text evidence="1">Part of the 50S ribosomal subunit. Forms a cluster with proteins L3 and L19. In the 70S ribosome, L14 and L19 interact and together make contacts with the 16S rRNA in bridges B5 and B8.</text>
</comment>
<comment type="similarity">
    <text evidence="1">Belongs to the universal ribosomal protein uL14 family.</text>
</comment>
<dbReference type="EMBL" id="CP000770">
    <property type="protein sequence ID" value="ABS30628.1"/>
    <property type="molecule type" value="Genomic_DNA"/>
</dbReference>
<dbReference type="SMR" id="A8Z677"/>
<dbReference type="STRING" id="444179.SMGWSS_231"/>
<dbReference type="KEGG" id="smg:SMGWSS_231"/>
<dbReference type="HOGENOM" id="CLU_095071_2_1_10"/>
<dbReference type="Proteomes" id="UP000000781">
    <property type="component" value="Chromosome"/>
</dbReference>
<dbReference type="GO" id="GO:0022625">
    <property type="term" value="C:cytosolic large ribosomal subunit"/>
    <property type="evidence" value="ECO:0007669"/>
    <property type="project" value="TreeGrafter"/>
</dbReference>
<dbReference type="GO" id="GO:0070180">
    <property type="term" value="F:large ribosomal subunit rRNA binding"/>
    <property type="evidence" value="ECO:0007669"/>
    <property type="project" value="TreeGrafter"/>
</dbReference>
<dbReference type="GO" id="GO:0003735">
    <property type="term" value="F:structural constituent of ribosome"/>
    <property type="evidence" value="ECO:0007669"/>
    <property type="project" value="InterPro"/>
</dbReference>
<dbReference type="GO" id="GO:0006412">
    <property type="term" value="P:translation"/>
    <property type="evidence" value="ECO:0007669"/>
    <property type="project" value="UniProtKB-UniRule"/>
</dbReference>
<dbReference type="CDD" id="cd00337">
    <property type="entry name" value="Ribosomal_uL14"/>
    <property type="match status" value="1"/>
</dbReference>
<dbReference type="Gene3D" id="2.40.150.20">
    <property type="entry name" value="Ribosomal protein L14"/>
    <property type="match status" value="1"/>
</dbReference>
<dbReference type="HAMAP" id="MF_01367">
    <property type="entry name" value="Ribosomal_uL14"/>
    <property type="match status" value="1"/>
</dbReference>
<dbReference type="InterPro" id="IPR000218">
    <property type="entry name" value="Ribosomal_uL14"/>
</dbReference>
<dbReference type="InterPro" id="IPR005745">
    <property type="entry name" value="Ribosomal_uL14_bac-type"/>
</dbReference>
<dbReference type="InterPro" id="IPR019972">
    <property type="entry name" value="Ribosomal_uL14_CS"/>
</dbReference>
<dbReference type="InterPro" id="IPR036853">
    <property type="entry name" value="Ribosomal_uL14_sf"/>
</dbReference>
<dbReference type="NCBIfam" id="TIGR01067">
    <property type="entry name" value="rplN_bact"/>
    <property type="match status" value="1"/>
</dbReference>
<dbReference type="PANTHER" id="PTHR11761">
    <property type="entry name" value="50S/60S RIBOSOMAL PROTEIN L14/L23"/>
    <property type="match status" value="1"/>
</dbReference>
<dbReference type="PANTHER" id="PTHR11761:SF3">
    <property type="entry name" value="LARGE RIBOSOMAL SUBUNIT PROTEIN UL14M"/>
    <property type="match status" value="1"/>
</dbReference>
<dbReference type="Pfam" id="PF00238">
    <property type="entry name" value="Ribosomal_L14"/>
    <property type="match status" value="1"/>
</dbReference>
<dbReference type="SMART" id="SM01374">
    <property type="entry name" value="Ribosomal_L14"/>
    <property type="match status" value="1"/>
</dbReference>
<dbReference type="SUPFAM" id="SSF50193">
    <property type="entry name" value="Ribosomal protein L14"/>
    <property type="match status" value="1"/>
</dbReference>
<dbReference type="PROSITE" id="PS00049">
    <property type="entry name" value="RIBOSOMAL_L14"/>
    <property type="match status" value="1"/>
</dbReference>
<evidence type="ECO:0000255" key="1">
    <source>
        <dbReference type="HAMAP-Rule" id="MF_01367"/>
    </source>
</evidence>
<evidence type="ECO:0000305" key="2"/>
<protein>
    <recommendedName>
        <fullName evidence="1">Large ribosomal subunit protein uL14</fullName>
    </recommendedName>
    <alternativeName>
        <fullName evidence="2">50S ribosomal protein L14</fullName>
    </alternativeName>
</protein>